<name>PG073_VAR67</name>
<protein>
    <recommendedName>
        <fullName>Core protein OPG073</fullName>
    </recommendedName>
    <alternativeName>
        <fullName>Protein E11</fullName>
    </alternativeName>
</protein>
<evidence type="ECO:0000250" key="1">
    <source>
        <dbReference type="UniProtKB" id="P68448"/>
    </source>
</evidence>
<evidence type="ECO:0000305" key="2"/>
<comment type="subcellular location">
    <subcellularLocation>
        <location evidence="1">Virion</location>
    </subcellularLocation>
    <text evidence="1">Found in the core of mature virions.</text>
</comment>
<comment type="induction">
    <text evidence="1">Expressed in the intermediate phase of the viral replicative cycle.</text>
</comment>
<comment type="similarity">
    <text evidence="2">Belongs to the orthopoxvirus OPG073 family.</text>
</comment>
<proteinExistence type="inferred from homology"/>
<organismHost>
    <name type="scientific">Homo sapiens</name>
    <name type="common">Human</name>
    <dbReference type="NCBI Taxonomy" id="9606"/>
</organismHost>
<sequence length="129" mass="14888">MELVNIFLETDAGRVKFVIKNTDDVCASELINKFVELLSEYIHIDQSEFYLVVKDKDIFYFKCDKGSISIVSNEFYVFDEPLLFVKDYTNVTGVEFIVTETMPCRIIPKNNHAVISVVTNHKFYNGLSL</sequence>
<dbReference type="EMBL" id="X69198">
    <property type="protein sequence ID" value="CAA48993.1"/>
    <property type="molecule type" value="Genomic_DNA"/>
</dbReference>
<dbReference type="PIR" id="E36842">
    <property type="entry name" value="E36842"/>
</dbReference>
<dbReference type="RefSeq" id="NP_042096.1">
    <property type="nucleotide sequence ID" value="NC_001611.1"/>
</dbReference>
<dbReference type="SMR" id="P0DST9"/>
<dbReference type="GeneID" id="1486406"/>
<dbReference type="KEGG" id="vg:1486406"/>
<dbReference type="Proteomes" id="UP000002060">
    <property type="component" value="Segment"/>
</dbReference>
<dbReference type="GO" id="GO:0044423">
    <property type="term" value="C:virion component"/>
    <property type="evidence" value="ECO:0007669"/>
    <property type="project" value="UniProtKB-KW"/>
</dbReference>
<dbReference type="InterPro" id="IPR009201">
    <property type="entry name" value="Virion_core"/>
</dbReference>
<dbReference type="Pfam" id="PF06138">
    <property type="entry name" value="Chordopox_E11"/>
    <property type="match status" value="1"/>
</dbReference>
<dbReference type="PIRSF" id="PIRSF015797">
    <property type="entry name" value="Virion_core"/>
    <property type="match status" value="1"/>
</dbReference>
<accession>P0DST9</accession>
<accession>P33822</accession>
<feature type="chain" id="PRO_0000099470" description="Core protein OPG073">
    <location>
        <begin position="1"/>
        <end position="129"/>
    </location>
</feature>
<gene>
    <name type="primary">OPG073</name>
    <name type="ORF">E11L</name>
</gene>
<organism>
    <name type="scientific">Variola virus (isolate Human/India/Ind3/1967)</name>
    <name type="common">VARV</name>
    <name type="synonym">Smallpox virus</name>
    <dbReference type="NCBI Taxonomy" id="587200"/>
    <lineage>
        <taxon>Viruses</taxon>
        <taxon>Varidnaviria</taxon>
        <taxon>Bamfordvirae</taxon>
        <taxon>Nucleocytoviricota</taxon>
        <taxon>Pokkesviricetes</taxon>
        <taxon>Chitovirales</taxon>
        <taxon>Poxviridae</taxon>
        <taxon>Chordopoxvirinae</taxon>
        <taxon>Orthopoxvirus</taxon>
        <taxon>Variola virus</taxon>
    </lineage>
</organism>
<reference key="1">
    <citation type="journal article" date="1993" name="Virus Res.">
        <title>Analysis of the nucleotide sequence of a 43 kbp segment of the genome of variola virus India-1967 strain.</title>
        <authorList>
            <person name="Shchelkunov S.N."/>
            <person name="Blinov V.M."/>
            <person name="Resenchuk S.M."/>
            <person name="Totmenin A.V."/>
            <person name="Sandakhchiev L.S."/>
        </authorList>
    </citation>
    <scope>NUCLEOTIDE SEQUENCE [GENOMIC DNA]</scope>
</reference>
<reference key="2">
    <citation type="journal article" date="1993" name="FEBS Lett.">
        <title>Genes of variola and vaccinia viruses necessary to overcome the host protective mechanisms.</title>
        <authorList>
            <person name="Shchelkunov S.N."/>
            <person name="Blinov V.M."/>
            <person name="Sandakhchiev L.S."/>
        </authorList>
    </citation>
    <scope>NUCLEOTIDE SEQUENCE [LARGE SCALE GENOMIC DNA]</scope>
</reference>
<keyword id="KW-1185">Reference proteome</keyword>
<keyword id="KW-0946">Virion</keyword>